<feature type="chain" id="PRO_0000222900" description="Probable movement protein p8">
    <location>
        <begin position="1"/>
        <end position="72"/>
    </location>
</feature>
<feature type="region of interest" description="Disordered" evidence="1">
    <location>
        <begin position="16"/>
        <end position="58"/>
    </location>
</feature>
<feature type="compositionally biased region" description="Polar residues" evidence="1">
    <location>
        <begin position="40"/>
        <end position="58"/>
    </location>
</feature>
<feature type="sequence variant">
    <original>F</original>
    <variation>L</variation>
    <location>
        <position position="72"/>
    </location>
</feature>
<accession>P22960</accession>
<organism>
    <name type="scientific">Tobacco necrosis virus (strain A)</name>
    <name type="common">TNV-A</name>
    <dbReference type="NCBI Taxonomy" id="12055"/>
    <lineage>
        <taxon>Viruses</taxon>
        <taxon>Riboviria</taxon>
        <taxon>Orthornavirae</taxon>
        <taxon>Kitrinoviricota</taxon>
        <taxon>Tolucaviricetes</taxon>
        <taxon>Tolivirales</taxon>
        <taxon>Tombusviridae</taxon>
        <taxon>Procedovirinae</taxon>
        <taxon>Alphanecrovirus</taxon>
        <taxon>Alphanecrovirus nicotianae</taxon>
    </lineage>
</organism>
<proteinExistence type="inferred from homology"/>
<comment type="function">
    <text evidence="2">Cell-to-cell movement.</text>
</comment>
<comment type="similarity">
    <text evidence="2">Belongs to the carmovirus/necrovirus/panicovirus movement protein p8 family.</text>
</comment>
<keyword id="KW-1185">Reference proteome</keyword>
<keyword id="KW-0813">Transport</keyword>
<keyword id="KW-0916">Viral movement protein</keyword>
<gene>
    <name type="ORF">ORF2</name>
</gene>
<evidence type="ECO:0000256" key="1">
    <source>
        <dbReference type="SAM" id="MobiDB-lite"/>
    </source>
</evidence>
<evidence type="ECO:0000305" key="2"/>
<reference key="1">
    <citation type="journal article" date="1990" name="Virology">
        <title>Genome structure of tobacco necrosis virus strain A.</title>
        <authorList>
            <person name="Meulewaeter F."/>
            <person name="Seurinck J."/>
            <person name="van Emmelo J."/>
        </authorList>
    </citation>
    <scope>NUCLEOTIDE SEQUENCE [GENOMIC RNA]</scope>
</reference>
<name>MP8_TNVA</name>
<sequence>MDYQTDVTEDNVQIRGRARSVEGKKHNGSGLTGVKRHAVSETSQKSQQGTGNGTMTNIAEEQTITVTYNFNF</sequence>
<organismHost>
    <name type="scientific">Chenopodium amaranticolor</name>
    <dbReference type="NCBI Taxonomy" id="66262"/>
</organismHost>
<organismHost>
    <name type="scientific">Chenopodium quinoa</name>
    <name type="common">Quinoa</name>
    <dbReference type="NCBI Taxonomy" id="63459"/>
</organismHost>
<organismHost>
    <name type="scientific">Cucumis sativus</name>
    <name type="common">Cucumber</name>
    <dbReference type="NCBI Taxonomy" id="3659"/>
</organismHost>
<organismHost>
    <name type="scientific">Nicotiana clevelandii</name>
    <name type="common">Wild tobacco</name>
    <dbReference type="NCBI Taxonomy" id="81866"/>
</organismHost>
<organismHost>
    <name type="scientific">Nicotiana tabacum</name>
    <name type="common">Common tobacco</name>
    <dbReference type="NCBI Taxonomy" id="4097"/>
</organismHost>
<organismHost>
    <name type="scientific">Phaseolus vulgaris</name>
    <name type="common">Kidney bean</name>
    <name type="synonym">French bean</name>
    <dbReference type="NCBI Taxonomy" id="3885"/>
</organismHost>
<organismHost>
    <name type="scientific">Tulipa gesneriana</name>
    <name type="common">Garden tulip</name>
    <dbReference type="NCBI Taxonomy" id="13306"/>
</organismHost>
<dbReference type="EMBL" id="M33002">
    <property type="protein sequence ID" value="AAA86435.1"/>
    <property type="molecule type" value="Genomic_RNA"/>
</dbReference>
<dbReference type="PIR" id="B35523">
    <property type="entry name" value="B35523"/>
</dbReference>
<dbReference type="RefSeq" id="NP_056826.1">
    <property type="nucleotide sequence ID" value="NC_001777.1"/>
</dbReference>
<dbReference type="KEGG" id="vg:1493902"/>
<dbReference type="OrthoDB" id="25370at10239"/>
<dbReference type="Proteomes" id="UP000000575">
    <property type="component" value="Genome"/>
</dbReference>
<dbReference type="GO" id="GO:0046740">
    <property type="term" value="P:transport of virus in host, cell to cell"/>
    <property type="evidence" value="ECO:0007669"/>
    <property type="project" value="UniProtKB-KW"/>
</dbReference>
<protein>
    <recommendedName>
        <fullName>Probable movement protein p8</fullName>
    </recommendedName>
</protein>